<sequence>MSKNNGKGAKGEFEFPQPAKKQTFSEMIYNPQEGTFFGRTGKSWSQLLLFYTIFYIVLAALFTICMQGLLSTISDTEPKWKLQDSLIGTNPGLGFRPLSEQTERGSVIAFDGKKPAESDYWIELIDDFLRDYNHTEGRDMKHCGFGQVLEPTDVCVVNTDLFGGCSKANNYGYKTNQPCIFLKLNKIFGWIPEVYDKEEKDMPDDLKKVINETKTEERQQVWVSCNGHLGKDKENFQNIRYFPSQGFPSYYYPFLNQPGYLSPLVAVQFNSPPKGQMLDVECRAWAKNIQYSGSVRDRKGSVTFQILLD</sequence>
<reference key="1">
    <citation type="journal article" date="1995" name="Proc. Natl. Acad. Sci. U.S.A.">
        <title>Two Drosophila nervous system antigens, Nervana 1 and 2, are homologous to the beta subunit of Na+,K(+)-ATPase.</title>
        <authorList>
            <person name="Sun B."/>
            <person name="Salvaterra P.M."/>
        </authorList>
    </citation>
    <scope>NUCLEOTIDE SEQUENCE [MRNA]</scope>
    <source>
        <strain>Canton-S</strain>
        <tissue>Embryo</tissue>
    </source>
</reference>
<reference key="2">
    <citation type="journal article" date="2000" name="Science">
        <title>The genome sequence of Drosophila melanogaster.</title>
        <authorList>
            <person name="Adams M.D."/>
            <person name="Celniker S.E."/>
            <person name="Holt R.A."/>
            <person name="Evans C.A."/>
            <person name="Gocayne J.D."/>
            <person name="Amanatides P.G."/>
            <person name="Scherer S.E."/>
            <person name="Li P.W."/>
            <person name="Hoskins R.A."/>
            <person name="Galle R.F."/>
            <person name="George R.A."/>
            <person name="Lewis S.E."/>
            <person name="Richards S."/>
            <person name="Ashburner M."/>
            <person name="Henderson S.N."/>
            <person name="Sutton G.G."/>
            <person name="Wortman J.R."/>
            <person name="Yandell M.D."/>
            <person name="Zhang Q."/>
            <person name="Chen L.X."/>
            <person name="Brandon R.C."/>
            <person name="Rogers Y.-H.C."/>
            <person name="Blazej R.G."/>
            <person name="Champe M."/>
            <person name="Pfeiffer B.D."/>
            <person name="Wan K.H."/>
            <person name="Doyle C."/>
            <person name="Baxter E.G."/>
            <person name="Helt G."/>
            <person name="Nelson C.R."/>
            <person name="Miklos G.L.G."/>
            <person name="Abril J.F."/>
            <person name="Agbayani A."/>
            <person name="An H.-J."/>
            <person name="Andrews-Pfannkoch C."/>
            <person name="Baldwin D."/>
            <person name="Ballew R.M."/>
            <person name="Basu A."/>
            <person name="Baxendale J."/>
            <person name="Bayraktaroglu L."/>
            <person name="Beasley E.M."/>
            <person name="Beeson K.Y."/>
            <person name="Benos P.V."/>
            <person name="Berman B.P."/>
            <person name="Bhandari D."/>
            <person name="Bolshakov S."/>
            <person name="Borkova D."/>
            <person name="Botchan M.R."/>
            <person name="Bouck J."/>
            <person name="Brokstein P."/>
            <person name="Brottier P."/>
            <person name="Burtis K.C."/>
            <person name="Busam D.A."/>
            <person name="Butler H."/>
            <person name="Cadieu E."/>
            <person name="Center A."/>
            <person name="Chandra I."/>
            <person name="Cherry J.M."/>
            <person name="Cawley S."/>
            <person name="Dahlke C."/>
            <person name="Davenport L.B."/>
            <person name="Davies P."/>
            <person name="de Pablos B."/>
            <person name="Delcher A."/>
            <person name="Deng Z."/>
            <person name="Mays A.D."/>
            <person name="Dew I."/>
            <person name="Dietz S.M."/>
            <person name="Dodson K."/>
            <person name="Doup L.E."/>
            <person name="Downes M."/>
            <person name="Dugan-Rocha S."/>
            <person name="Dunkov B.C."/>
            <person name="Dunn P."/>
            <person name="Durbin K.J."/>
            <person name="Evangelista C.C."/>
            <person name="Ferraz C."/>
            <person name="Ferriera S."/>
            <person name="Fleischmann W."/>
            <person name="Fosler C."/>
            <person name="Gabrielian A.E."/>
            <person name="Garg N.S."/>
            <person name="Gelbart W.M."/>
            <person name="Glasser K."/>
            <person name="Glodek A."/>
            <person name="Gong F."/>
            <person name="Gorrell J.H."/>
            <person name="Gu Z."/>
            <person name="Guan P."/>
            <person name="Harris M."/>
            <person name="Harris N.L."/>
            <person name="Harvey D.A."/>
            <person name="Heiman T.J."/>
            <person name="Hernandez J.R."/>
            <person name="Houck J."/>
            <person name="Hostin D."/>
            <person name="Houston K.A."/>
            <person name="Howland T.J."/>
            <person name="Wei M.-H."/>
            <person name="Ibegwam C."/>
            <person name="Jalali M."/>
            <person name="Kalush F."/>
            <person name="Karpen G.H."/>
            <person name="Ke Z."/>
            <person name="Kennison J.A."/>
            <person name="Ketchum K.A."/>
            <person name="Kimmel B.E."/>
            <person name="Kodira C.D."/>
            <person name="Kraft C.L."/>
            <person name="Kravitz S."/>
            <person name="Kulp D."/>
            <person name="Lai Z."/>
            <person name="Lasko P."/>
            <person name="Lei Y."/>
            <person name="Levitsky A.A."/>
            <person name="Li J.H."/>
            <person name="Li Z."/>
            <person name="Liang Y."/>
            <person name="Lin X."/>
            <person name="Liu X."/>
            <person name="Mattei B."/>
            <person name="McIntosh T.C."/>
            <person name="McLeod M.P."/>
            <person name="McPherson D."/>
            <person name="Merkulov G."/>
            <person name="Milshina N.V."/>
            <person name="Mobarry C."/>
            <person name="Morris J."/>
            <person name="Moshrefi A."/>
            <person name="Mount S.M."/>
            <person name="Moy M."/>
            <person name="Murphy B."/>
            <person name="Murphy L."/>
            <person name="Muzny D.M."/>
            <person name="Nelson D.L."/>
            <person name="Nelson D.R."/>
            <person name="Nelson K.A."/>
            <person name="Nixon K."/>
            <person name="Nusskern D.R."/>
            <person name="Pacleb J.M."/>
            <person name="Palazzolo M."/>
            <person name="Pittman G.S."/>
            <person name="Pan S."/>
            <person name="Pollard J."/>
            <person name="Puri V."/>
            <person name="Reese M.G."/>
            <person name="Reinert K."/>
            <person name="Remington K."/>
            <person name="Saunders R.D.C."/>
            <person name="Scheeler F."/>
            <person name="Shen H."/>
            <person name="Shue B.C."/>
            <person name="Siden-Kiamos I."/>
            <person name="Simpson M."/>
            <person name="Skupski M.P."/>
            <person name="Smith T.J."/>
            <person name="Spier E."/>
            <person name="Spradling A.C."/>
            <person name="Stapleton M."/>
            <person name="Strong R."/>
            <person name="Sun E."/>
            <person name="Svirskas R."/>
            <person name="Tector C."/>
            <person name="Turner R."/>
            <person name="Venter E."/>
            <person name="Wang A.H."/>
            <person name="Wang X."/>
            <person name="Wang Z.-Y."/>
            <person name="Wassarman D.A."/>
            <person name="Weinstock G.M."/>
            <person name="Weissenbach J."/>
            <person name="Williams S.M."/>
            <person name="Woodage T."/>
            <person name="Worley K.C."/>
            <person name="Wu D."/>
            <person name="Yang S."/>
            <person name="Yao Q.A."/>
            <person name="Ye J."/>
            <person name="Yeh R.-F."/>
            <person name="Zaveri J.S."/>
            <person name="Zhan M."/>
            <person name="Zhang G."/>
            <person name="Zhao Q."/>
            <person name="Zheng L."/>
            <person name="Zheng X.H."/>
            <person name="Zhong F.N."/>
            <person name="Zhong W."/>
            <person name="Zhou X."/>
            <person name="Zhu S.C."/>
            <person name="Zhu X."/>
            <person name="Smith H.O."/>
            <person name="Gibbs R.A."/>
            <person name="Myers E.W."/>
            <person name="Rubin G.M."/>
            <person name="Venter J.C."/>
        </authorList>
    </citation>
    <scope>NUCLEOTIDE SEQUENCE [LARGE SCALE GENOMIC DNA]</scope>
    <source>
        <strain>Berkeley</strain>
    </source>
</reference>
<reference key="3">
    <citation type="journal article" date="2002" name="Genome Biol.">
        <title>Annotation of the Drosophila melanogaster euchromatic genome: a systematic review.</title>
        <authorList>
            <person name="Misra S."/>
            <person name="Crosby M.A."/>
            <person name="Mungall C.J."/>
            <person name="Matthews B.B."/>
            <person name="Campbell K.S."/>
            <person name="Hradecky P."/>
            <person name="Huang Y."/>
            <person name="Kaminker J.S."/>
            <person name="Millburn G.H."/>
            <person name="Prochnik S.E."/>
            <person name="Smith C.D."/>
            <person name="Tupy J.L."/>
            <person name="Whitfield E.J."/>
            <person name="Bayraktaroglu L."/>
            <person name="Berman B.P."/>
            <person name="Bettencourt B.R."/>
            <person name="Celniker S.E."/>
            <person name="de Grey A.D.N.J."/>
            <person name="Drysdale R.A."/>
            <person name="Harris N.L."/>
            <person name="Richter J."/>
            <person name="Russo S."/>
            <person name="Schroeder A.J."/>
            <person name="Shu S.Q."/>
            <person name="Stapleton M."/>
            <person name="Yamada C."/>
            <person name="Ashburner M."/>
            <person name="Gelbart W.M."/>
            <person name="Rubin G.M."/>
            <person name="Lewis S.E."/>
        </authorList>
    </citation>
    <scope>GENOME REANNOTATION</scope>
    <source>
        <strain>Berkeley</strain>
    </source>
</reference>
<reference key="4">
    <citation type="journal article" date="2002" name="Genome Biol.">
        <title>A Drosophila full-length cDNA resource.</title>
        <authorList>
            <person name="Stapleton M."/>
            <person name="Carlson J.W."/>
            <person name="Brokstein P."/>
            <person name="Yu C."/>
            <person name="Champe M."/>
            <person name="George R.A."/>
            <person name="Guarin H."/>
            <person name="Kronmiller B."/>
            <person name="Pacleb J.M."/>
            <person name="Park S."/>
            <person name="Wan K.H."/>
            <person name="Rubin G.M."/>
            <person name="Celniker S.E."/>
        </authorList>
    </citation>
    <scope>NUCLEOTIDE SEQUENCE [LARGE SCALE MRNA]</scope>
    <source>
        <strain>Berkeley</strain>
        <tissue>Embryo</tissue>
    </source>
</reference>
<reference key="5">
    <citation type="journal article" date="1995" name="J. Neurochem.">
        <title>Characterization of nervana, a Drosophila melanogaster neuron-specific glycoprotein antigen recognized by anti-horseradish peroxidase antibodies.</title>
        <authorList>
            <person name="Sun B."/>
            <person name="Salvaterra P.M."/>
        </authorList>
    </citation>
    <scope>DEVELOPMENTAL STAGE</scope>
    <scope>TISSUE SPECIFICITY</scope>
    <source>
        <strain>Canton-S</strain>
        <tissue>Head</tissue>
    </source>
</reference>
<reference key="6">
    <citation type="journal article" date="1998" name="J. Neurochem.">
        <title>Functional analysis and tissue-specific expression of Drosophila Na+,K+-ATPase subunits.</title>
        <authorList>
            <person name="Sun B."/>
            <person name="Wang W."/>
            <person name="Salvaterra P.M."/>
        </authorList>
    </citation>
    <scope>FUNCTION</scope>
    <scope>TISSUE SPECIFICITY</scope>
</reference>
<reference key="7">
    <citation type="journal article" date="2007" name="Glycobiology">
        <title>Identification of N-glycosylated proteins from the central nervous system of Drosophila melanogaster.</title>
        <authorList>
            <person name="Koles K."/>
            <person name="Lim J.-M."/>
            <person name="Aoki K."/>
            <person name="Porterfield M."/>
            <person name="Tiemeyer M."/>
            <person name="Wells L."/>
            <person name="Panin V."/>
        </authorList>
    </citation>
    <scope>GLYCOSYLATION [LARGE SCALE ANALYSIS] AT ASN-133 AND ASN-211</scope>
    <scope>IDENTIFICATION BY MASS SPECTROMETRY</scope>
    <source>
        <strain>Oregon-R</strain>
        <tissue>Head</tissue>
    </source>
</reference>
<reference key="8">
    <citation type="journal article" date="2007" name="Hum. Mol. Genet.">
        <title>A novel family of transmembrane proteins interacting with beta subunits of the Na,K-ATPase.</title>
        <authorList>
            <person name="Gorokhova S."/>
            <person name="Bibert S."/>
            <person name="Geering K."/>
            <person name="Heintz N."/>
        </authorList>
    </citation>
    <scope>INTERACTION WITH NKAIN</scope>
</reference>
<feature type="chain" id="PRO_0000219120" description="Sodium/potassium-transporting ATPase subunit beta-1">
    <location>
        <begin position="1"/>
        <end position="309"/>
    </location>
</feature>
<feature type="topological domain" description="Cytoplasmic" evidence="2">
    <location>
        <begin position="1"/>
        <end position="45"/>
    </location>
</feature>
<feature type="transmembrane region" description="Helical; Signal-anchor for type II membrane protein" evidence="2">
    <location>
        <begin position="46"/>
        <end position="66"/>
    </location>
</feature>
<feature type="topological domain" description="Extracellular" evidence="2">
    <location>
        <begin position="67"/>
        <end position="309"/>
    </location>
</feature>
<feature type="glycosylation site" description="N-linked (GlcNAc...) asparagine" evidence="4">
    <location>
        <position position="133"/>
    </location>
</feature>
<feature type="glycosylation site" description="N-linked (GlcNAc...) asparagine" evidence="4">
    <location>
        <position position="211"/>
    </location>
</feature>
<feature type="disulfide bond" evidence="1">
    <location>
        <begin position="143"/>
        <end position="155"/>
    </location>
</feature>
<feature type="disulfide bond" evidence="1">
    <location>
        <begin position="165"/>
        <end position="179"/>
    </location>
</feature>
<feature type="disulfide bond" evidence="1">
    <location>
        <begin position="225"/>
        <end position="282"/>
    </location>
</feature>
<feature type="sequence conflict" description="In Ref. 4; AAM52659." evidence="7" ref="4">
    <original>D</original>
    <variation>N</variation>
    <location>
        <position position="205"/>
    </location>
</feature>
<feature type="sequence conflict" description="In Ref. 1; AAC46608." evidence="7" ref="1">
    <original>QQ</original>
    <variation>HE</variation>
    <location>
        <begin position="219"/>
        <end position="220"/>
    </location>
</feature>
<feature type="sequence conflict" description="In Ref. 1; AAC46608." evidence="7" ref="1">
    <original>N</original>
    <variation>F</variation>
    <location>
        <position position="226"/>
    </location>
</feature>
<feature type="sequence conflict" description="In Ref. 1; AAC46608." evidence="7" ref="1">
    <original>V</original>
    <variation>A</variation>
    <location>
        <position position="295"/>
    </location>
</feature>
<accession>Q24046</accession>
<accession>Q8MR34</accession>
<accession>Q9VM86</accession>
<name>ATPB1_DROME</name>
<keyword id="KW-1003">Cell membrane</keyword>
<keyword id="KW-1015">Disulfide bond</keyword>
<keyword id="KW-0325">Glycoprotein</keyword>
<keyword id="KW-0406">Ion transport</keyword>
<keyword id="KW-0472">Membrane</keyword>
<keyword id="KW-0630">Potassium</keyword>
<keyword id="KW-0633">Potassium transport</keyword>
<keyword id="KW-1185">Reference proteome</keyword>
<keyword id="KW-0735">Signal-anchor</keyword>
<keyword id="KW-0915">Sodium</keyword>
<keyword id="KW-0739">Sodium transport</keyword>
<keyword id="KW-0740">Sodium/potassium transport</keyword>
<keyword id="KW-0812">Transmembrane</keyword>
<keyword id="KW-1133">Transmembrane helix</keyword>
<keyword id="KW-0813">Transport</keyword>
<evidence type="ECO:0000250" key="1"/>
<evidence type="ECO:0000255" key="2"/>
<evidence type="ECO:0000269" key="3">
    <source>
    </source>
</evidence>
<evidence type="ECO:0000269" key="4">
    <source>
    </source>
</evidence>
<evidence type="ECO:0000269" key="5">
    <source>
    </source>
</evidence>
<evidence type="ECO:0000269" key="6">
    <source>
    </source>
</evidence>
<evidence type="ECO:0000305" key="7"/>
<dbReference type="EMBL" id="U22438">
    <property type="protein sequence ID" value="AAC46608.1"/>
    <property type="molecule type" value="mRNA"/>
</dbReference>
<dbReference type="EMBL" id="AE014134">
    <property type="protein sequence ID" value="AAF52437.1"/>
    <property type="molecule type" value="Genomic_DNA"/>
</dbReference>
<dbReference type="EMBL" id="AY122147">
    <property type="protein sequence ID" value="AAM52659.1"/>
    <property type="molecule type" value="mRNA"/>
</dbReference>
<dbReference type="RefSeq" id="NP_001260163.1">
    <property type="nucleotide sequence ID" value="NM_001273234.1"/>
</dbReference>
<dbReference type="RefSeq" id="NP_477167.1">
    <property type="nucleotide sequence ID" value="NM_057819.4"/>
</dbReference>
<dbReference type="SMR" id="Q24046"/>
<dbReference type="BioGRID" id="60104">
    <property type="interactions" value="6"/>
</dbReference>
<dbReference type="DIP" id="DIP-20098N"/>
<dbReference type="FunCoup" id="Q24046">
    <property type="interactions" value="287"/>
</dbReference>
<dbReference type="IntAct" id="Q24046">
    <property type="interactions" value="2"/>
</dbReference>
<dbReference type="STRING" id="7227.FBpp0079012"/>
<dbReference type="GlyCosmos" id="Q24046">
    <property type="glycosylation" value="2 sites, No reported glycans"/>
</dbReference>
<dbReference type="GlyGen" id="Q24046">
    <property type="glycosylation" value="2 sites"/>
</dbReference>
<dbReference type="iPTMnet" id="Q24046"/>
<dbReference type="PaxDb" id="7227-FBpp0079012"/>
<dbReference type="DNASU" id="33952"/>
<dbReference type="EnsemblMetazoa" id="FBtr0079384">
    <property type="protein sequence ID" value="FBpp0079012"/>
    <property type="gene ID" value="FBgn0015776"/>
</dbReference>
<dbReference type="EnsemblMetazoa" id="FBtr0332370">
    <property type="protein sequence ID" value="FBpp0304646"/>
    <property type="gene ID" value="FBgn0015776"/>
</dbReference>
<dbReference type="GeneID" id="33952"/>
<dbReference type="KEGG" id="dme:Dmel_CG9258"/>
<dbReference type="AGR" id="FB:FBgn0015776"/>
<dbReference type="CTD" id="33952"/>
<dbReference type="FlyBase" id="FBgn0015776">
    <property type="gene designation" value="nrv1"/>
</dbReference>
<dbReference type="VEuPathDB" id="VectorBase:FBgn0015776"/>
<dbReference type="eggNOG" id="KOG3927">
    <property type="taxonomic scope" value="Eukaryota"/>
</dbReference>
<dbReference type="GeneTree" id="ENSGT01030000234579"/>
<dbReference type="HOGENOM" id="CLU_057702_0_0_1"/>
<dbReference type="InParanoid" id="Q24046"/>
<dbReference type="OMA" id="YENQFPQ"/>
<dbReference type="OrthoDB" id="5912413at2759"/>
<dbReference type="PhylomeDB" id="Q24046"/>
<dbReference type="Reactome" id="R-DME-210991">
    <property type="pathway name" value="Basigin interactions"/>
</dbReference>
<dbReference type="Reactome" id="R-DME-2173795">
    <property type="pathway name" value="Downregulation of SMAD2/3:SMAD4 transcriptional activity"/>
</dbReference>
<dbReference type="BioGRID-ORCS" id="33952">
    <property type="hits" value="0 hits in 3 CRISPR screens"/>
</dbReference>
<dbReference type="GenomeRNAi" id="33952"/>
<dbReference type="PRO" id="PR:Q24046"/>
<dbReference type="Proteomes" id="UP000000803">
    <property type="component" value="Chromosome 2L"/>
</dbReference>
<dbReference type="Bgee" id="FBgn0015776">
    <property type="expression patterns" value="Expressed in oviduct (Drosophila) and 206 other cell types or tissues"/>
</dbReference>
<dbReference type="ExpressionAtlas" id="Q24046">
    <property type="expression patterns" value="baseline and differential"/>
</dbReference>
<dbReference type="GO" id="GO:0005886">
    <property type="term" value="C:plasma membrane"/>
    <property type="evidence" value="ECO:0000314"/>
    <property type="project" value="FlyBase"/>
</dbReference>
<dbReference type="GO" id="GO:0005890">
    <property type="term" value="C:sodium:potassium-exchanging ATPase complex"/>
    <property type="evidence" value="ECO:0000314"/>
    <property type="project" value="FlyBase"/>
</dbReference>
<dbReference type="GO" id="GO:0001671">
    <property type="term" value="F:ATPase activator activity"/>
    <property type="evidence" value="ECO:0000314"/>
    <property type="project" value="FlyBase"/>
</dbReference>
<dbReference type="GO" id="GO:0030007">
    <property type="term" value="P:intracellular potassium ion homeostasis"/>
    <property type="evidence" value="ECO:0000318"/>
    <property type="project" value="GO_Central"/>
</dbReference>
<dbReference type="GO" id="GO:0006883">
    <property type="term" value="P:intracellular sodium ion homeostasis"/>
    <property type="evidence" value="ECO:0000318"/>
    <property type="project" value="GO_Central"/>
</dbReference>
<dbReference type="GO" id="GO:0006812">
    <property type="term" value="P:monoatomic cation transport"/>
    <property type="evidence" value="ECO:0000314"/>
    <property type="project" value="FlyBase"/>
</dbReference>
<dbReference type="GO" id="GO:1990573">
    <property type="term" value="P:potassium ion import across plasma membrane"/>
    <property type="evidence" value="ECO:0000318"/>
    <property type="project" value="GO_Central"/>
</dbReference>
<dbReference type="GO" id="GO:0036376">
    <property type="term" value="P:sodium ion export across plasma membrane"/>
    <property type="evidence" value="ECO:0000318"/>
    <property type="project" value="GO_Central"/>
</dbReference>
<dbReference type="FunFam" id="2.60.40.1660:FF:000004">
    <property type="entry name" value="sodium/potassium-transporting ATPase subunit beta-2"/>
    <property type="match status" value="1"/>
</dbReference>
<dbReference type="Gene3D" id="2.60.40.1660">
    <property type="entry name" value="Na, k-atpase alpha subunit"/>
    <property type="match status" value="1"/>
</dbReference>
<dbReference type="InterPro" id="IPR000402">
    <property type="entry name" value="Na/K_ATPase_sub_beta"/>
</dbReference>
<dbReference type="InterPro" id="IPR038702">
    <property type="entry name" value="Na/K_ATPase_sub_beta_sf"/>
</dbReference>
<dbReference type="PANTHER" id="PTHR11523:SF31">
    <property type="entry name" value="AT04468P-RELATED"/>
    <property type="match status" value="1"/>
</dbReference>
<dbReference type="PANTHER" id="PTHR11523">
    <property type="entry name" value="SODIUM/POTASSIUM-DEPENDENT ATPASE BETA SUBUNIT"/>
    <property type="match status" value="1"/>
</dbReference>
<dbReference type="Pfam" id="PF00287">
    <property type="entry name" value="Na_K-ATPase"/>
    <property type="match status" value="1"/>
</dbReference>
<dbReference type="PROSITE" id="PS00390">
    <property type="entry name" value="ATPASE_NA_K_BETA_1"/>
    <property type="match status" value="1"/>
</dbReference>
<comment type="function">
    <text evidence="6">This is the non-catalytic component of the active enzyme, which catalyzes the hydrolysis of ATP coupled with the exchange of Na(+) and K(+) ions across the plasma membrane. The beta subunit regulates, through assembly of alpha/beta heterodimers, the number of sodium pumps transported to the plasma membrane.</text>
</comment>
<comment type="subunit">
    <text evidence="3 7">The sodium/potassium-transporting ATPase is composed of a catalytic alpha subunit, an auxiliary non-catalytic beta subunit and an additional regulatory subunit. Interacts with nkain.</text>
</comment>
<comment type="subcellular location">
    <subcellularLocation>
        <location evidence="7">Cell membrane</location>
        <topology evidence="7">Single-pass type II membrane protein</topology>
    </subcellularLocation>
</comment>
<comment type="tissue specificity">
    <text evidence="5 6">In embryos, it is expressed in the neurons of the CNS and PNS, in Garland cells and posterior spiracles. In adults, it is concentrated in the thorax and abdomen (muscle tissue, digestive system and Malpighian tubules) and weakly expressed in the head. Expression is diffuse in the nervous system.</text>
</comment>
<comment type="developmental stage">
    <text evidence="5">Expression in embryos is first seen 12 hours after oviposition, peaks at 24 hours and decreases to a low level by 48 hours. Low levels are seen during larval and early pupal development. Levels increase during late pupae to maximal at the adult stage.</text>
</comment>
<comment type="similarity">
    <text evidence="7">Belongs to the X(+)/potassium ATPases subunit beta family.</text>
</comment>
<organism>
    <name type="scientific">Drosophila melanogaster</name>
    <name type="common">Fruit fly</name>
    <dbReference type="NCBI Taxonomy" id="7227"/>
    <lineage>
        <taxon>Eukaryota</taxon>
        <taxon>Metazoa</taxon>
        <taxon>Ecdysozoa</taxon>
        <taxon>Arthropoda</taxon>
        <taxon>Hexapoda</taxon>
        <taxon>Insecta</taxon>
        <taxon>Pterygota</taxon>
        <taxon>Neoptera</taxon>
        <taxon>Endopterygota</taxon>
        <taxon>Diptera</taxon>
        <taxon>Brachycera</taxon>
        <taxon>Muscomorpha</taxon>
        <taxon>Ephydroidea</taxon>
        <taxon>Drosophilidae</taxon>
        <taxon>Drosophila</taxon>
        <taxon>Sophophora</taxon>
    </lineage>
</organism>
<proteinExistence type="evidence at protein level"/>
<gene>
    <name type="primary">nrv1</name>
    <name type="ORF">CG9258</name>
</gene>
<protein>
    <recommendedName>
        <fullName>Sodium/potassium-transporting ATPase subunit beta-1</fullName>
    </recommendedName>
    <alternativeName>
        <fullName>Protein nervana 1</fullName>
    </alternativeName>
    <alternativeName>
        <fullName>Sodium/potassium-dependent ATPase subunit beta-1</fullName>
    </alternativeName>
</protein>